<gene>
    <name evidence="2" type="primary">deoD</name>
    <name type="ordered locus">Lm4b_01872</name>
</gene>
<name>DEOD_LISMC</name>
<feature type="chain" id="PRO_1000215752" description="Purine nucleoside phosphorylase DeoD-type">
    <location>
        <begin position="1"/>
        <end position="233"/>
    </location>
</feature>
<feature type="active site" description="Proton donor" evidence="2">
    <location>
        <position position="203"/>
    </location>
</feature>
<feature type="binding site" evidence="1">
    <location>
        <position position="4"/>
    </location>
    <ligand>
        <name>a purine D-ribonucleoside</name>
        <dbReference type="ChEBI" id="CHEBI:142355"/>
        <note>ligand shared between dimeric partners</note>
    </ligand>
</feature>
<feature type="binding site" description="in other chain" evidence="1">
    <location>
        <position position="20"/>
    </location>
    <ligand>
        <name>phosphate</name>
        <dbReference type="ChEBI" id="CHEBI:43474"/>
        <note>ligand shared between dimeric partners</note>
    </ligand>
</feature>
<feature type="binding site" description="in other chain" evidence="1">
    <location>
        <position position="24"/>
    </location>
    <ligand>
        <name>phosphate</name>
        <dbReference type="ChEBI" id="CHEBI:43474"/>
        <note>ligand shared between dimeric partners</note>
    </ligand>
</feature>
<feature type="binding site" evidence="1">
    <location>
        <position position="43"/>
    </location>
    <ligand>
        <name>phosphate</name>
        <dbReference type="ChEBI" id="CHEBI:43474"/>
        <note>ligand shared between dimeric partners</note>
    </ligand>
</feature>
<feature type="binding site" description="in other chain" evidence="1">
    <location>
        <begin position="87"/>
        <end position="90"/>
    </location>
    <ligand>
        <name>phosphate</name>
        <dbReference type="ChEBI" id="CHEBI:43474"/>
        <note>ligand shared between dimeric partners</note>
    </ligand>
</feature>
<feature type="binding site" description="in other chain" evidence="1">
    <location>
        <begin position="178"/>
        <end position="180"/>
    </location>
    <ligand>
        <name>a purine D-ribonucleoside</name>
        <dbReference type="ChEBI" id="CHEBI:142355"/>
        <note>ligand shared between dimeric partners</note>
    </ligand>
</feature>
<feature type="binding site" description="in other chain" evidence="1">
    <location>
        <begin position="202"/>
        <end position="203"/>
    </location>
    <ligand>
        <name>a purine D-ribonucleoside</name>
        <dbReference type="ChEBI" id="CHEBI:142355"/>
        <note>ligand shared between dimeric partners</note>
    </ligand>
</feature>
<feature type="site" description="Important for catalytic activity" evidence="2">
    <location>
        <position position="216"/>
    </location>
</feature>
<proteinExistence type="inferred from homology"/>
<dbReference type="EC" id="2.4.2.1" evidence="2"/>
<dbReference type="EMBL" id="FM242711">
    <property type="protein sequence ID" value="CAS05630.1"/>
    <property type="molecule type" value="Genomic_DNA"/>
</dbReference>
<dbReference type="RefSeq" id="WP_003723411.1">
    <property type="nucleotide sequence ID" value="NC_012488.1"/>
</dbReference>
<dbReference type="SMR" id="C1KWF5"/>
<dbReference type="GeneID" id="87010957"/>
<dbReference type="KEGG" id="lmc:Lm4b_01872"/>
<dbReference type="HOGENOM" id="CLU_068457_2_0_9"/>
<dbReference type="GO" id="GO:0005829">
    <property type="term" value="C:cytosol"/>
    <property type="evidence" value="ECO:0007669"/>
    <property type="project" value="TreeGrafter"/>
</dbReference>
<dbReference type="GO" id="GO:0004731">
    <property type="term" value="F:purine-nucleoside phosphorylase activity"/>
    <property type="evidence" value="ECO:0007669"/>
    <property type="project" value="UniProtKB-UniRule"/>
</dbReference>
<dbReference type="GO" id="GO:0006152">
    <property type="term" value="P:purine nucleoside catabolic process"/>
    <property type="evidence" value="ECO:0007669"/>
    <property type="project" value="TreeGrafter"/>
</dbReference>
<dbReference type="CDD" id="cd09006">
    <property type="entry name" value="PNP_EcPNPI-like"/>
    <property type="match status" value="1"/>
</dbReference>
<dbReference type="Gene3D" id="3.40.50.1580">
    <property type="entry name" value="Nucleoside phosphorylase domain"/>
    <property type="match status" value="1"/>
</dbReference>
<dbReference type="HAMAP" id="MF_01627">
    <property type="entry name" value="Pur_nucleosid_phosp"/>
    <property type="match status" value="1"/>
</dbReference>
<dbReference type="InterPro" id="IPR004402">
    <property type="entry name" value="DeoD-type"/>
</dbReference>
<dbReference type="InterPro" id="IPR018016">
    <property type="entry name" value="Nucleoside_phosphorylase_CS"/>
</dbReference>
<dbReference type="InterPro" id="IPR000845">
    <property type="entry name" value="Nucleoside_phosphorylase_d"/>
</dbReference>
<dbReference type="InterPro" id="IPR035994">
    <property type="entry name" value="Nucleoside_phosphorylase_sf"/>
</dbReference>
<dbReference type="NCBIfam" id="TIGR00107">
    <property type="entry name" value="deoD"/>
    <property type="match status" value="1"/>
</dbReference>
<dbReference type="NCBIfam" id="NF004489">
    <property type="entry name" value="PRK05819.1"/>
    <property type="match status" value="1"/>
</dbReference>
<dbReference type="NCBIfam" id="NF009914">
    <property type="entry name" value="PRK13374.1"/>
    <property type="match status" value="1"/>
</dbReference>
<dbReference type="PANTHER" id="PTHR43691:SF11">
    <property type="entry name" value="FI09636P-RELATED"/>
    <property type="match status" value="1"/>
</dbReference>
<dbReference type="PANTHER" id="PTHR43691">
    <property type="entry name" value="URIDINE PHOSPHORYLASE"/>
    <property type="match status" value="1"/>
</dbReference>
<dbReference type="Pfam" id="PF01048">
    <property type="entry name" value="PNP_UDP_1"/>
    <property type="match status" value="1"/>
</dbReference>
<dbReference type="SUPFAM" id="SSF53167">
    <property type="entry name" value="Purine and uridine phosphorylases"/>
    <property type="match status" value="1"/>
</dbReference>
<dbReference type="PROSITE" id="PS01232">
    <property type="entry name" value="PNP_UDP_1"/>
    <property type="match status" value="1"/>
</dbReference>
<organism>
    <name type="scientific">Listeria monocytogenes serotype 4b (strain CLIP80459)</name>
    <dbReference type="NCBI Taxonomy" id="568819"/>
    <lineage>
        <taxon>Bacteria</taxon>
        <taxon>Bacillati</taxon>
        <taxon>Bacillota</taxon>
        <taxon>Bacilli</taxon>
        <taxon>Bacillales</taxon>
        <taxon>Listeriaceae</taxon>
        <taxon>Listeria</taxon>
    </lineage>
</organism>
<accession>C1KWF5</accession>
<comment type="function">
    <text evidence="2">Catalyzes the reversible phosphorolytic breakdown of the N-glycosidic bond in the beta-(deoxy)ribonucleoside molecules, with the formation of the corresponding free purine bases and pentose-1-phosphate.</text>
</comment>
<comment type="catalytic activity">
    <reaction evidence="2">
        <text>a purine D-ribonucleoside + phosphate = a purine nucleobase + alpha-D-ribose 1-phosphate</text>
        <dbReference type="Rhea" id="RHEA:19805"/>
        <dbReference type="ChEBI" id="CHEBI:26386"/>
        <dbReference type="ChEBI" id="CHEBI:43474"/>
        <dbReference type="ChEBI" id="CHEBI:57720"/>
        <dbReference type="ChEBI" id="CHEBI:142355"/>
        <dbReference type="EC" id="2.4.2.1"/>
    </reaction>
</comment>
<comment type="catalytic activity">
    <reaction evidence="2">
        <text>a purine 2'-deoxy-D-ribonucleoside + phosphate = a purine nucleobase + 2-deoxy-alpha-D-ribose 1-phosphate</text>
        <dbReference type="Rhea" id="RHEA:36431"/>
        <dbReference type="ChEBI" id="CHEBI:26386"/>
        <dbReference type="ChEBI" id="CHEBI:43474"/>
        <dbReference type="ChEBI" id="CHEBI:57259"/>
        <dbReference type="ChEBI" id="CHEBI:142361"/>
        <dbReference type="EC" id="2.4.2.1"/>
    </reaction>
</comment>
<comment type="subunit">
    <text evidence="2">Homohexamer; trimer of homodimers.</text>
</comment>
<comment type="similarity">
    <text evidence="2">Belongs to the PNP/UDP phosphorylase family.</text>
</comment>
<sequence>MSVHIEAKQGEIAETILLPGDPLRAKYIAETFLEDVVLFNQVRGMLGFTGTYKGEKVSVMGTGMGIPSISIYVNELIQSYDVKNLIRVGTMGGIQADVKVRDVVIAQAASTDSQINRNTFAGVDFAPVADFSLLKKAYDAGIEKGLSLKVGNVFSADRFYNDQLDKQQLADYGVLGIEMEAAALYTLAQKYGRRALAILTVSDHIFTGEETSAEERQTTFNDMIVVALEAAIK</sequence>
<evidence type="ECO:0000250" key="1">
    <source>
        <dbReference type="UniProtKB" id="P50389"/>
    </source>
</evidence>
<evidence type="ECO:0000255" key="2">
    <source>
        <dbReference type="HAMAP-Rule" id="MF_01627"/>
    </source>
</evidence>
<reference key="1">
    <citation type="journal article" date="2012" name="BMC Genomics">
        <title>Comparative genomics and transcriptomics of lineages I, II, and III strains of Listeria monocytogenes.</title>
        <authorList>
            <person name="Hain T."/>
            <person name="Ghai R."/>
            <person name="Billion A."/>
            <person name="Kuenne C.T."/>
            <person name="Steinweg C."/>
            <person name="Izar B."/>
            <person name="Mohamed W."/>
            <person name="Mraheil M."/>
            <person name="Domann E."/>
            <person name="Schaffrath S."/>
            <person name="Karst U."/>
            <person name="Goesmann A."/>
            <person name="Oehm S."/>
            <person name="Puhler A."/>
            <person name="Merkl R."/>
            <person name="Vorwerk S."/>
            <person name="Glaser P."/>
            <person name="Garrido P."/>
            <person name="Rusniok C."/>
            <person name="Buchrieser C."/>
            <person name="Goebel W."/>
            <person name="Chakraborty T."/>
        </authorList>
    </citation>
    <scope>NUCLEOTIDE SEQUENCE [LARGE SCALE GENOMIC DNA]</scope>
    <source>
        <strain>CLIP80459</strain>
    </source>
</reference>
<keyword id="KW-0328">Glycosyltransferase</keyword>
<keyword id="KW-0808">Transferase</keyword>
<protein>
    <recommendedName>
        <fullName evidence="2">Purine nucleoside phosphorylase DeoD-type</fullName>
        <shortName evidence="2">PNP</shortName>
        <ecNumber evidence="2">2.4.2.1</ecNumber>
    </recommendedName>
</protein>